<proteinExistence type="inferred from homology"/>
<feature type="chain" id="PRO_1000148049" description="Flagellar hook-basal body complex protein FliE">
    <location>
        <begin position="1"/>
        <end position="104"/>
    </location>
</feature>
<name>FLIE_ECO27</name>
<organism>
    <name type="scientific">Escherichia coli O127:H6 (strain E2348/69 / EPEC)</name>
    <dbReference type="NCBI Taxonomy" id="574521"/>
    <lineage>
        <taxon>Bacteria</taxon>
        <taxon>Pseudomonadati</taxon>
        <taxon>Pseudomonadota</taxon>
        <taxon>Gammaproteobacteria</taxon>
        <taxon>Enterobacterales</taxon>
        <taxon>Enterobacteriaceae</taxon>
        <taxon>Escherichia</taxon>
    </lineage>
</organism>
<keyword id="KW-0975">Bacterial flagellum</keyword>
<keyword id="KW-1185">Reference proteome</keyword>
<gene>
    <name evidence="1" type="primary">fliE</name>
    <name type="ordered locus">E2348C_2051</name>
</gene>
<comment type="subcellular location">
    <subcellularLocation>
        <location evidence="1">Bacterial flagellum basal body</location>
    </subcellularLocation>
</comment>
<comment type="similarity">
    <text evidence="1">Belongs to the FliE family.</text>
</comment>
<reference key="1">
    <citation type="journal article" date="2009" name="J. Bacteriol.">
        <title>Complete genome sequence and comparative genome analysis of enteropathogenic Escherichia coli O127:H6 strain E2348/69.</title>
        <authorList>
            <person name="Iguchi A."/>
            <person name="Thomson N.R."/>
            <person name="Ogura Y."/>
            <person name="Saunders D."/>
            <person name="Ooka T."/>
            <person name="Henderson I.R."/>
            <person name="Harris D."/>
            <person name="Asadulghani M."/>
            <person name="Kurokawa K."/>
            <person name="Dean P."/>
            <person name="Kenny B."/>
            <person name="Quail M.A."/>
            <person name="Thurston S."/>
            <person name="Dougan G."/>
            <person name="Hayashi T."/>
            <person name="Parkhill J."/>
            <person name="Frankel G."/>
        </authorList>
    </citation>
    <scope>NUCLEOTIDE SEQUENCE [LARGE SCALE GENOMIC DNA]</scope>
    <source>
        <strain>E2348/69 / EPEC</strain>
    </source>
</reference>
<sequence>MSAIQGIEGVISQLQATAMSARAQESLPQPTISFAGQLHAALDRISDTQTAARTQAEKFTLGEPGVALNDVMTDMQKASVSMQMGIQVRNKLVAAYQEVMSMQV</sequence>
<evidence type="ECO:0000255" key="1">
    <source>
        <dbReference type="HAMAP-Rule" id="MF_00724"/>
    </source>
</evidence>
<protein>
    <recommendedName>
        <fullName evidence="1">Flagellar hook-basal body complex protein FliE</fullName>
    </recommendedName>
</protein>
<dbReference type="EMBL" id="FM180568">
    <property type="protein sequence ID" value="CAS09599.1"/>
    <property type="molecule type" value="Genomic_DNA"/>
</dbReference>
<dbReference type="RefSeq" id="WP_001274299.1">
    <property type="nucleotide sequence ID" value="NC_011601.1"/>
</dbReference>
<dbReference type="SMR" id="B7USV1"/>
<dbReference type="GeneID" id="93775248"/>
<dbReference type="KEGG" id="ecg:E2348C_2051"/>
<dbReference type="HOGENOM" id="CLU_147249_0_2_6"/>
<dbReference type="Proteomes" id="UP000008205">
    <property type="component" value="Chromosome"/>
</dbReference>
<dbReference type="GO" id="GO:0009425">
    <property type="term" value="C:bacterial-type flagellum basal body"/>
    <property type="evidence" value="ECO:0007669"/>
    <property type="project" value="UniProtKB-SubCell"/>
</dbReference>
<dbReference type="GO" id="GO:0003774">
    <property type="term" value="F:cytoskeletal motor activity"/>
    <property type="evidence" value="ECO:0007669"/>
    <property type="project" value="InterPro"/>
</dbReference>
<dbReference type="GO" id="GO:0005198">
    <property type="term" value="F:structural molecule activity"/>
    <property type="evidence" value="ECO:0007669"/>
    <property type="project" value="InterPro"/>
</dbReference>
<dbReference type="GO" id="GO:0071973">
    <property type="term" value="P:bacterial-type flagellum-dependent cell motility"/>
    <property type="evidence" value="ECO:0007669"/>
    <property type="project" value="InterPro"/>
</dbReference>
<dbReference type="HAMAP" id="MF_00724">
    <property type="entry name" value="FliE"/>
    <property type="match status" value="1"/>
</dbReference>
<dbReference type="InterPro" id="IPR001624">
    <property type="entry name" value="FliE"/>
</dbReference>
<dbReference type="NCBIfam" id="TIGR00205">
    <property type="entry name" value="fliE"/>
    <property type="match status" value="1"/>
</dbReference>
<dbReference type="PANTHER" id="PTHR34653">
    <property type="match status" value="1"/>
</dbReference>
<dbReference type="PANTHER" id="PTHR34653:SF1">
    <property type="entry name" value="FLAGELLAR HOOK-BASAL BODY COMPLEX PROTEIN FLIE"/>
    <property type="match status" value="1"/>
</dbReference>
<dbReference type="Pfam" id="PF02049">
    <property type="entry name" value="FliE"/>
    <property type="match status" value="1"/>
</dbReference>
<dbReference type="PRINTS" id="PR01006">
    <property type="entry name" value="FLGHOOKFLIE"/>
</dbReference>
<accession>B7USV1</accession>